<feature type="chain" id="PRO_0000149159" description="Proliferating cell nuclear antigen">
    <location>
        <begin position="1"/>
        <end position="261"/>
    </location>
</feature>
<feature type="DNA-binding region" evidence="4">
    <location>
        <begin position="61"/>
        <end position="80"/>
    </location>
</feature>
<feature type="modified residue" description="N6-acetyllysine" evidence="2">
    <location>
        <position position="14"/>
    </location>
</feature>
<feature type="modified residue" description="N6-acetyllysine" evidence="2">
    <location>
        <position position="77"/>
    </location>
</feature>
<feature type="modified residue" description="N6-acetyllysine" evidence="2">
    <location>
        <position position="80"/>
    </location>
</feature>
<feature type="modified residue" description="Phosphotyrosine; by EGFR" evidence="2">
    <location>
        <position position="211"/>
    </location>
</feature>
<feature type="modified residue" description="N6-acetyllysine" evidence="2">
    <location>
        <position position="248"/>
    </location>
</feature>
<feature type="disulfide bond" evidence="2">
    <location>
        <begin position="135"/>
        <end position="162"/>
    </location>
</feature>
<feature type="cross-link" description="Glycyl lysine isopeptide (Lys-Gly) (interchain with G-Cter in SUMO2); alternate" evidence="2">
    <location>
        <position position="164"/>
    </location>
</feature>
<feature type="cross-link" description="Glycyl lysine isopeptide (Lys-Gly) (interchain with G-Cter in ubiquitin); alternate" evidence="2">
    <location>
        <position position="164"/>
    </location>
</feature>
<feature type="cross-link" description="Glycyl lysine isopeptide (Lys-Gly) (interchain with G-Cter in SUMO2)" evidence="2">
    <location>
        <position position="254"/>
    </location>
</feature>
<name>PCNA_MACFA</name>
<reference key="1">
    <citation type="submission" date="2001-02" db="EMBL/GenBank/DDBJ databases">
        <authorList>
            <person name="Casley W.L."/>
            <person name="Leblanc C.A."/>
            <person name="Curran I.H.A."/>
        </authorList>
    </citation>
    <scope>NUCLEOTIDE SEQUENCE [MRNA]</scope>
</reference>
<keyword id="KW-0007">Acetylation</keyword>
<keyword id="KW-1015">Disulfide bond</keyword>
<keyword id="KW-0227">DNA damage</keyword>
<keyword id="KW-0234">DNA repair</keyword>
<keyword id="KW-0235">DNA replication</keyword>
<keyword id="KW-0238">DNA-binding</keyword>
<keyword id="KW-1017">Isopeptide bond</keyword>
<keyword id="KW-0488">Methylation</keyword>
<keyword id="KW-0539">Nucleus</keyword>
<keyword id="KW-0597">Phosphoprotein</keyword>
<keyword id="KW-1185">Reference proteome</keyword>
<keyword id="KW-0832">Ubl conjugation</keyword>
<gene>
    <name type="primary">PCNA</name>
</gene>
<evidence type="ECO:0000250" key="1">
    <source>
        <dbReference type="UniProtKB" id="P04961"/>
    </source>
</evidence>
<evidence type="ECO:0000250" key="2">
    <source>
        <dbReference type="UniProtKB" id="P12004"/>
    </source>
</evidence>
<evidence type="ECO:0000250" key="3">
    <source>
        <dbReference type="UniProtKB" id="P17918"/>
    </source>
</evidence>
<evidence type="ECO:0000255" key="4"/>
<evidence type="ECO:0000305" key="5"/>
<protein>
    <recommendedName>
        <fullName>Proliferating cell nuclear antigen</fullName>
        <shortName>PCNA</shortName>
    </recommendedName>
</protein>
<comment type="function">
    <text evidence="2">Auxiliary protein of DNA polymerase delta and epsilon, is involved in the control of eukaryotic DNA replication by increasing the polymerase's processibility during elongation of the leading strand. Induces a robust stimulatory effect on the 3'-5' exonuclease and 3'-phosphodiesterase, but not apurinic-apyrimidinic (AP) endonuclease, APEX2 activities. Has to be loaded onto DNA in order to be able to stimulate APEX2. Plays a key role in DNA damage response (DDR) by being conveniently positioned at the replication fork to coordinate DNA replication with DNA repair and DNA damage tolerance pathways. Acts as a loading platform to recruit DDR proteins that allow completion of DNA replication after DNA damage and promote postreplication repair: Monoubiquitinated PCNA leads to recruitment of translesion (TLS) polymerases, while 'Lys-63'-linked polyubiquitination of PCNA is involved in error-free pathway and employs recombination mechanisms to synthesize across the lesion (By similarity).</text>
</comment>
<comment type="subunit">
    <text evidence="1 2 3">Homotrimer. Interacts with p300/EP300; the interaction occurs on chromatin in UV-irradiated damaged cells. Interacts with CREBBP (via transactivation domain and C-terminus); the interaction occurs on chromatin in UV-irradiated damaged cells. Directly interacts with POLD1, POLD3 and POLD4 subunits of the DNA polymerase delta complex, POLD3 being the major interacting partner; the interaction with POLD3 is inhibited by CDKN1A/p21(CIP1). Forms a complex with activator 1 heteropentamer in the presence of ATP. Interacts with EXO1, POLH, POLK, DNMT1, ERCC5, FEN1, CDC6 and POLDIP2. Interacts with POLB (By similarity). Interacts with APEX2; this interaction is triggered by reactive oxygen species and increased by misincorporation of uracil in nuclear DNA. Forms a ternary complex with DNTTIP2 and core histone (By similarity). Interacts with KCTD10 and PPP1R15A (By similarity). Interacts with SMARCA5/SNF2H (By similarity). Interacts with BAZ1B/WSTF; the interaction is direct and is required for BAZ1B/WSTF binding to replication foci during S phase (By similarity). Interacts with HLTF and SHPRH. Interacts with NUDT15; this interaction is disrupted in response to UV irradiation and acetylation. Interacts with CDKN1A/p21(CIP1) and CDT1; interacts via their PIP-box which also recruits the DCX(DTL) complex. The interaction with CDKN1A inhibits POLD3 binding. Interacts with DDX11. Interacts with EGFR; positively regulates PCNA. Interacts with PARPBP. Interacts (when ubiquitinated) with SPRTN; leading to enhance RAD18-mediated PCNA ubiquitination. Interacts (when polyubiquitinated) with ZRANB3. Interacts with SMARCAD1. Interacts with CDKN1C. Interacts with PCLAF (via PIP-box). Interacts with RTEL1 (via PIP-box); the interaction is direct and essential for the suppression of telomere fragility. Interacts with FAM111A (via PIP-box); the interaction is direct and required for PCNA loading on chromatin binding. Interacts with LIG1. Interacts with SETMAR. Interacts with ANKRD17. Interacts with FBXO18/FBH1 (via PIP-box); the interaction recruits the DCX(DTL) complex and promotes ubiquitination and degradation of FBXO18/FBH1. Interacts with POLN (By similarity). Interacts with SDE2 (via PIP-box); the interaction is direct and prevents ultraviolet light induced monoubiquitination (By similarity). Component of the replisome complex composed of at least DONSON, MCM2, MCM7, PCNA and TICRR; interaction at least with PCNA occurs during DNA replication (By similarity). Interacts with MAPK15; the interaction is chromatin binding dependent and prevents MDM2-mediated PCNA destruction by inhibiting the association of PCNA with MDM2. Interacts with PARP10 (via PIP-box) (By similarity). Interacts with DDI2 (By similarity). Interacts with HMCES (via PIP-box) (By similarity). Interacts with TRAIP (via PIP-box) (By similarity). Interacts with UHRF2 (By similarity). Interacts with ALKBH2; this interaction is enhanced during the S-phase of the cell cycle. Interacts with ATAD5; the interaction promotes USP1-mediated PCNA deubiquitination (By similarity). Interacts (when phosphorylated) with GRB2 (By similarity). Interacts with ANG (By similarity). Interacts with nuclear UNG; this interaction mediates UNG recruitment to S-phase replication foci. Interacts with ERCC6L2 (via an atypical PIP-box); this interaction facilitates cenrtomeric localization of ERCC6L2 (By similarity).</text>
</comment>
<comment type="subcellular location">
    <subcellularLocation>
        <location evidence="2">Nucleus</location>
    </subcellularLocation>
    <text evidence="2">Forms nuclear foci representing sites of ongoing DNA replication and vary in morphology and number during S phase. Together with APEX2, is redistributed in discrete nuclear foci in presence of oxidative DNA damaging agents. Colocalizes with CREBBP, EP300 and POLD1 to sites of DNA damage (By similarity).</text>
</comment>
<comment type="PTM">
    <text evidence="2">Phosphorylated. Phosphorylation at Tyr-211 by EGFR stabilizes chromatin-associated PCNA (By similarity).</text>
</comment>
<comment type="PTM">
    <text evidence="2">Acetylated by CREBBP and p300/EP300; preferentially acetylated by CREBBP on Lys-80, Lys-13 and Lys-14 and on Lys-77 by p300/EP300 upon loading on chromatin in response to UV irradiation. Lysine acetylation disrupts association with chromatin, hence promoting PCNA ubiquitination and proteasomal degradation in response to UV damage in a CREBBP- and EP300-dependent manner. Acetylation disrupts interaction with NUDT15 and promotes degradation (By similarity).</text>
</comment>
<comment type="PTM">
    <text evidence="2">Ubiquitinated. Following DNA damage, can be either monoubiquitinated to stimulate direct bypass of DNA lesions by specialized DNA polymerases or polyubiquitinated to promote recombination-dependent DNA synthesis across DNA lesions by template switching mechanisms. Following induction of replication stress, monoubiquitinated by the UBE2B-RAD18 complex on Lys-164, leading to recruit translesion (TLS) polymerases, which are able to synthesize across DNA lesions in a potentially error-prone manner. An error-free pathway also exists and requires non-canonical polyubiquitination on Lys-164 through 'Lys-63' linkage of ubiquitin moieties by the E2 complex UBE2N-UBE2V2 and the E3 ligases, HLTF, RNF8 and SHPRH. This error-free pathway, also known as template switching, employs recombination mechanisms to synthesize across the lesion, using as a template the undamaged, newly synthesized strand of the sister chromatid. Monoubiquitination at Lys-164 also takes place in undamaged proliferating cells, and is mediated by the DCX(DTL) complex, leading to enhance PCNA-dependent translesion DNA synthesis. Sumoylated during S phase (By similarity).</text>
</comment>
<comment type="PTM">
    <text evidence="2">Methylated on glutamate residues by ARMT1.</text>
</comment>
<comment type="similarity">
    <text evidence="5">Belongs to the PCNA family.</text>
</comment>
<organism>
    <name type="scientific">Macaca fascicularis</name>
    <name type="common">Crab-eating macaque</name>
    <name type="synonym">Cynomolgus monkey</name>
    <dbReference type="NCBI Taxonomy" id="9541"/>
    <lineage>
        <taxon>Eukaryota</taxon>
        <taxon>Metazoa</taxon>
        <taxon>Chordata</taxon>
        <taxon>Craniata</taxon>
        <taxon>Vertebrata</taxon>
        <taxon>Euteleostomi</taxon>
        <taxon>Mammalia</taxon>
        <taxon>Eutheria</taxon>
        <taxon>Euarchontoglires</taxon>
        <taxon>Primates</taxon>
        <taxon>Haplorrhini</taxon>
        <taxon>Catarrhini</taxon>
        <taxon>Cercopithecidae</taxon>
        <taxon>Cercopithecinae</taxon>
        <taxon>Macaca</taxon>
    </lineage>
</organism>
<proteinExistence type="evidence at transcript level"/>
<accession>P61258</accession>
<dbReference type="EMBL" id="AF347680">
    <property type="protein sequence ID" value="AAK29418.1"/>
    <property type="molecule type" value="mRNA"/>
</dbReference>
<dbReference type="RefSeq" id="NP_001274649.1">
    <property type="nucleotide sequence ID" value="NM_001287720.1"/>
</dbReference>
<dbReference type="RefSeq" id="XP_045218477.1">
    <property type="nucleotide sequence ID" value="XM_045362542.2"/>
</dbReference>
<dbReference type="BMRB" id="P61258"/>
<dbReference type="SMR" id="P61258"/>
<dbReference type="STRING" id="9541.ENSMFAP00000031561"/>
<dbReference type="Ensembl" id="ENSMFAT00000005779.2">
    <property type="protein sequence ID" value="ENSMFAP00000031561.1"/>
    <property type="gene ID" value="ENSMFAG00000036845.2"/>
</dbReference>
<dbReference type="GeneID" id="102124021"/>
<dbReference type="VEuPathDB" id="HostDB:ENSMFAG00000036845"/>
<dbReference type="eggNOG" id="KOG1636">
    <property type="taxonomic scope" value="Eukaryota"/>
</dbReference>
<dbReference type="GeneTree" id="ENSGT00390000004965"/>
<dbReference type="OMA" id="EMKLINM"/>
<dbReference type="OrthoDB" id="534348at2759"/>
<dbReference type="Proteomes" id="UP000233100">
    <property type="component" value="Chromosome 10"/>
</dbReference>
<dbReference type="Bgee" id="ENSMFAG00000036845">
    <property type="expression patterns" value="Expressed in bone marrow and 13 other cell types or tissues"/>
</dbReference>
<dbReference type="GO" id="GO:0005813">
    <property type="term" value="C:centrosome"/>
    <property type="evidence" value="ECO:0007669"/>
    <property type="project" value="Ensembl"/>
</dbReference>
<dbReference type="GO" id="GO:0000785">
    <property type="term" value="C:chromatin"/>
    <property type="evidence" value="ECO:0000250"/>
    <property type="project" value="UniProtKB"/>
</dbReference>
<dbReference type="GO" id="GO:0000307">
    <property type="term" value="C:cyclin-dependent protein kinase holoenzyme complex"/>
    <property type="evidence" value="ECO:0007669"/>
    <property type="project" value="Ensembl"/>
</dbReference>
<dbReference type="GO" id="GO:0001673">
    <property type="term" value="C:male germ cell nucleus"/>
    <property type="evidence" value="ECO:0007669"/>
    <property type="project" value="Ensembl"/>
</dbReference>
<dbReference type="GO" id="GO:0016604">
    <property type="term" value="C:nuclear body"/>
    <property type="evidence" value="ECO:0007669"/>
    <property type="project" value="Ensembl"/>
</dbReference>
<dbReference type="GO" id="GO:0005652">
    <property type="term" value="C:nuclear lamina"/>
    <property type="evidence" value="ECO:0007669"/>
    <property type="project" value="Ensembl"/>
</dbReference>
<dbReference type="GO" id="GO:0043596">
    <property type="term" value="C:nuclear replication fork"/>
    <property type="evidence" value="ECO:0007669"/>
    <property type="project" value="Ensembl"/>
</dbReference>
<dbReference type="GO" id="GO:0043626">
    <property type="term" value="C:PCNA complex"/>
    <property type="evidence" value="ECO:0007669"/>
    <property type="project" value="Ensembl"/>
</dbReference>
<dbReference type="GO" id="GO:0070557">
    <property type="term" value="C:PCNA-p21 complex"/>
    <property type="evidence" value="ECO:0000250"/>
    <property type="project" value="UniProtKB"/>
</dbReference>
<dbReference type="GO" id="GO:0003682">
    <property type="term" value="F:chromatin binding"/>
    <property type="evidence" value="ECO:0000250"/>
    <property type="project" value="UniProtKB"/>
</dbReference>
<dbReference type="GO" id="GO:0003684">
    <property type="term" value="F:damaged DNA binding"/>
    <property type="evidence" value="ECO:0007669"/>
    <property type="project" value="Ensembl"/>
</dbReference>
<dbReference type="GO" id="GO:0032139">
    <property type="term" value="F:dinucleotide insertion or deletion binding"/>
    <property type="evidence" value="ECO:0007669"/>
    <property type="project" value="Ensembl"/>
</dbReference>
<dbReference type="GO" id="GO:0070182">
    <property type="term" value="F:DNA polymerase binding"/>
    <property type="evidence" value="ECO:0007669"/>
    <property type="project" value="Ensembl"/>
</dbReference>
<dbReference type="GO" id="GO:0030337">
    <property type="term" value="F:DNA polymerase processivity factor activity"/>
    <property type="evidence" value="ECO:0007669"/>
    <property type="project" value="InterPro"/>
</dbReference>
<dbReference type="GO" id="GO:0035035">
    <property type="term" value="F:histone acetyltransferase binding"/>
    <property type="evidence" value="ECO:0007669"/>
    <property type="project" value="Ensembl"/>
</dbReference>
<dbReference type="GO" id="GO:0042802">
    <property type="term" value="F:identical protein binding"/>
    <property type="evidence" value="ECO:0007669"/>
    <property type="project" value="Ensembl"/>
</dbReference>
<dbReference type="GO" id="GO:0032405">
    <property type="term" value="F:MutLalpha complex binding"/>
    <property type="evidence" value="ECO:0007669"/>
    <property type="project" value="Ensembl"/>
</dbReference>
<dbReference type="GO" id="GO:0000701">
    <property type="term" value="F:purine-specific mismatch base pair DNA N-glycosylase activity"/>
    <property type="evidence" value="ECO:0007669"/>
    <property type="project" value="Ensembl"/>
</dbReference>
<dbReference type="GO" id="GO:0030971">
    <property type="term" value="F:receptor tyrosine kinase binding"/>
    <property type="evidence" value="ECO:0007669"/>
    <property type="project" value="Ensembl"/>
</dbReference>
<dbReference type="GO" id="GO:0006287">
    <property type="term" value="P:base-excision repair, gap-filling"/>
    <property type="evidence" value="ECO:0007669"/>
    <property type="project" value="Ensembl"/>
</dbReference>
<dbReference type="GO" id="GO:0034644">
    <property type="term" value="P:cellular response to UV"/>
    <property type="evidence" value="ECO:0007669"/>
    <property type="project" value="Ensembl"/>
</dbReference>
<dbReference type="GO" id="GO:0071466">
    <property type="term" value="P:cellular response to xenobiotic stimulus"/>
    <property type="evidence" value="ECO:0007669"/>
    <property type="project" value="Ensembl"/>
</dbReference>
<dbReference type="GO" id="GO:0030855">
    <property type="term" value="P:epithelial cell differentiation"/>
    <property type="evidence" value="ECO:0007669"/>
    <property type="project" value="Ensembl"/>
</dbReference>
<dbReference type="GO" id="GO:0006272">
    <property type="term" value="P:leading strand elongation"/>
    <property type="evidence" value="ECO:0007669"/>
    <property type="project" value="TreeGrafter"/>
</dbReference>
<dbReference type="GO" id="GO:0006298">
    <property type="term" value="P:mismatch repair"/>
    <property type="evidence" value="ECO:0007669"/>
    <property type="project" value="Ensembl"/>
</dbReference>
<dbReference type="GO" id="GO:1902990">
    <property type="term" value="P:mitotic telomere maintenance via semi-conservative replication"/>
    <property type="evidence" value="ECO:0007669"/>
    <property type="project" value="Ensembl"/>
</dbReference>
<dbReference type="GO" id="GO:0000122">
    <property type="term" value="P:negative regulation of transcription by RNA polymerase II"/>
    <property type="evidence" value="ECO:0007669"/>
    <property type="project" value="Ensembl"/>
</dbReference>
<dbReference type="GO" id="GO:0032077">
    <property type="term" value="P:positive regulation of deoxyribonuclease activity"/>
    <property type="evidence" value="ECO:0000250"/>
    <property type="project" value="UniProtKB"/>
</dbReference>
<dbReference type="GO" id="GO:0045739">
    <property type="term" value="P:positive regulation of DNA repair"/>
    <property type="evidence" value="ECO:0007669"/>
    <property type="project" value="Ensembl"/>
</dbReference>
<dbReference type="GO" id="GO:0045740">
    <property type="term" value="P:positive regulation of DNA replication"/>
    <property type="evidence" value="ECO:0007669"/>
    <property type="project" value="Ensembl"/>
</dbReference>
<dbReference type="GO" id="GO:0031297">
    <property type="term" value="P:replication fork processing"/>
    <property type="evidence" value="ECO:0007669"/>
    <property type="project" value="Ensembl"/>
</dbReference>
<dbReference type="GO" id="GO:0019985">
    <property type="term" value="P:translesion synthesis"/>
    <property type="evidence" value="ECO:0000250"/>
    <property type="project" value="UniProtKB"/>
</dbReference>
<dbReference type="CDD" id="cd00577">
    <property type="entry name" value="PCNA"/>
    <property type="match status" value="1"/>
</dbReference>
<dbReference type="FunFam" id="3.10.150.10:FF:000006">
    <property type="entry name" value="Proliferating cell nuclear antigen"/>
    <property type="match status" value="1"/>
</dbReference>
<dbReference type="FunFam" id="3.10.150.10:FF:000008">
    <property type="entry name" value="Proliferating cell nuclear antigen"/>
    <property type="match status" value="1"/>
</dbReference>
<dbReference type="FunFam" id="3.70.10.10:FF:000001">
    <property type="entry name" value="Proliferating cell nuclear antigen"/>
    <property type="match status" value="1"/>
</dbReference>
<dbReference type="Gene3D" id="3.70.10.10">
    <property type="match status" value="1"/>
</dbReference>
<dbReference type="HAMAP" id="MF_00317">
    <property type="entry name" value="DNApol_clamp_arch"/>
    <property type="match status" value="1"/>
</dbReference>
<dbReference type="InterPro" id="IPR046938">
    <property type="entry name" value="DNA_clamp_sf"/>
</dbReference>
<dbReference type="InterPro" id="IPR000730">
    <property type="entry name" value="Pr_cel_nuc_antig"/>
</dbReference>
<dbReference type="InterPro" id="IPR022649">
    <property type="entry name" value="Pr_cel_nuc_antig_C"/>
</dbReference>
<dbReference type="InterPro" id="IPR022659">
    <property type="entry name" value="Pr_cel_nuc_antig_CS"/>
</dbReference>
<dbReference type="InterPro" id="IPR022648">
    <property type="entry name" value="Pr_cel_nuc_antig_N"/>
</dbReference>
<dbReference type="NCBIfam" id="TIGR00590">
    <property type="entry name" value="pcna"/>
    <property type="match status" value="1"/>
</dbReference>
<dbReference type="PANTHER" id="PTHR11352">
    <property type="entry name" value="PROLIFERATING CELL NUCLEAR ANTIGEN"/>
    <property type="match status" value="1"/>
</dbReference>
<dbReference type="PANTHER" id="PTHR11352:SF0">
    <property type="entry name" value="PROLIFERATING CELL NUCLEAR ANTIGEN"/>
    <property type="match status" value="1"/>
</dbReference>
<dbReference type="Pfam" id="PF02747">
    <property type="entry name" value="PCNA_C"/>
    <property type="match status" value="1"/>
</dbReference>
<dbReference type="Pfam" id="PF00705">
    <property type="entry name" value="PCNA_N"/>
    <property type="match status" value="1"/>
</dbReference>
<dbReference type="PRINTS" id="PR00339">
    <property type="entry name" value="PCNACYCLIN"/>
</dbReference>
<dbReference type="SUPFAM" id="SSF55979">
    <property type="entry name" value="DNA clamp"/>
    <property type="match status" value="2"/>
</dbReference>
<dbReference type="PROSITE" id="PS01251">
    <property type="entry name" value="PCNA_1"/>
    <property type="match status" value="1"/>
</dbReference>
<dbReference type="PROSITE" id="PS00293">
    <property type="entry name" value="PCNA_2"/>
    <property type="match status" value="1"/>
</dbReference>
<sequence>MFEARLVQGSILKKVLEALKDLINEACWDISSSGVNLQSMDSSHVSLVQLTLRSEGFDTYRCDRNLAMGVNLTSMSKILKCAGNEDIITLRAEDNADTLALVFEAPNQEKVSDYEMKLMDLDVEQLGIPEQEYSCVVKMPSGEFARICRDLSHIGDAVVISCAKDGVKFSASGELGNGNIKLSQTSNVDKEEEAVTIEMNEPVQLTFALRYLNFFTKATPLSSTVTLSMSADVPLVVEYKIADMGHLKYYLAPKIEDEEGS</sequence>